<accession>B5Z6E6</accession>
<keyword id="KW-0963">Cytoplasm</keyword>
<keyword id="KW-0342">GTP-binding</keyword>
<keyword id="KW-0396">Initiation factor</keyword>
<keyword id="KW-0547">Nucleotide-binding</keyword>
<keyword id="KW-0648">Protein biosynthesis</keyword>
<keyword id="KW-1185">Reference proteome</keyword>
<protein>
    <recommendedName>
        <fullName evidence="2">Translation initiation factor IF-2</fullName>
    </recommendedName>
</protein>
<organism>
    <name type="scientific">Helicobacter pylori (strain G27)</name>
    <dbReference type="NCBI Taxonomy" id="563041"/>
    <lineage>
        <taxon>Bacteria</taxon>
        <taxon>Pseudomonadati</taxon>
        <taxon>Campylobacterota</taxon>
        <taxon>Epsilonproteobacteria</taxon>
        <taxon>Campylobacterales</taxon>
        <taxon>Helicobacteraceae</taxon>
        <taxon>Helicobacter</taxon>
    </lineage>
</organism>
<proteinExistence type="inferred from homology"/>
<evidence type="ECO:0000250" key="1"/>
<evidence type="ECO:0000255" key="2">
    <source>
        <dbReference type="HAMAP-Rule" id="MF_00100"/>
    </source>
</evidence>
<evidence type="ECO:0000256" key="3">
    <source>
        <dbReference type="SAM" id="MobiDB-lite"/>
    </source>
</evidence>
<comment type="function">
    <text evidence="2">One of the essential components for the initiation of protein synthesis. Protects formylmethionyl-tRNA from spontaneous hydrolysis and promotes its binding to the 30S ribosomal subunits. Also involved in the hydrolysis of GTP during the formation of the 70S ribosomal complex.</text>
</comment>
<comment type="subcellular location">
    <subcellularLocation>
        <location evidence="2">Cytoplasm</location>
    </subcellularLocation>
</comment>
<comment type="similarity">
    <text evidence="2">Belongs to the TRAFAC class translation factor GTPase superfamily. Classic translation factor GTPase family. IF-2 subfamily.</text>
</comment>
<reference key="1">
    <citation type="journal article" date="2009" name="J. Bacteriol.">
        <title>The complete genome sequence of Helicobacter pylori strain G27.</title>
        <authorList>
            <person name="Baltrus D.A."/>
            <person name="Amieva M.R."/>
            <person name="Covacci A."/>
            <person name="Lowe T.M."/>
            <person name="Merrell D.S."/>
            <person name="Ottemann K.M."/>
            <person name="Stein M."/>
            <person name="Salama N.R."/>
            <person name="Guillemin K."/>
        </authorList>
    </citation>
    <scope>NUCLEOTIDE SEQUENCE [LARGE SCALE GENOMIC DNA]</scope>
    <source>
        <strain>G27</strain>
    </source>
</reference>
<gene>
    <name evidence="2" type="primary">infB</name>
    <name type="ordered locus">HPG27_380</name>
</gene>
<dbReference type="EMBL" id="CP001173">
    <property type="protein sequence ID" value="ACI27145.1"/>
    <property type="molecule type" value="Genomic_DNA"/>
</dbReference>
<dbReference type="RefSeq" id="WP_001293376.1">
    <property type="nucleotide sequence ID" value="NC_011333.1"/>
</dbReference>
<dbReference type="SMR" id="B5Z6E6"/>
<dbReference type="KEGG" id="hpg:HPG27_380"/>
<dbReference type="HOGENOM" id="CLU_006301_4_0_7"/>
<dbReference type="Proteomes" id="UP000001735">
    <property type="component" value="Chromosome"/>
</dbReference>
<dbReference type="GO" id="GO:0005829">
    <property type="term" value="C:cytosol"/>
    <property type="evidence" value="ECO:0007669"/>
    <property type="project" value="TreeGrafter"/>
</dbReference>
<dbReference type="GO" id="GO:0005525">
    <property type="term" value="F:GTP binding"/>
    <property type="evidence" value="ECO:0007669"/>
    <property type="project" value="UniProtKB-KW"/>
</dbReference>
<dbReference type="GO" id="GO:0003924">
    <property type="term" value="F:GTPase activity"/>
    <property type="evidence" value="ECO:0007669"/>
    <property type="project" value="UniProtKB-UniRule"/>
</dbReference>
<dbReference type="GO" id="GO:0003743">
    <property type="term" value="F:translation initiation factor activity"/>
    <property type="evidence" value="ECO:0007669"/>
    <property type="project" value="UniProtKB-UniRule"/>
</dbReference>
<dbReference type="CDD" id="cd01887">
    <property type="entry name" value="IF2_eIF5B"/>
    <property type="match status" value="1"/>
</dbReference>
<dbReference type="CDD" id="cd03702">
    <property type="entry name" value="IF2_mtIF2_II"/>
    <property type="match status" value="1"/>
</dbReference>
<dbReference type="CDD" id="cd03692">
    <property type="entry name" value="mtIF2_IVc"/>
    <property type="match status" value="1"/>
</dbReference>
<dbReference type="FunFam" id="2.40.30.10:FF:000008">
    <property type="entry name" value="Translation initiation factor IF-2"/>
    <property type="match status" value="1"/>
</dbReference>
<dbReference type="FunFam" id="2.40.30.10:FF:000054">
    <property type="entry name" value="Translation initiation factor IF-2"/>
    <property type="match status" value="1"/>
</dbReference>
<dbReference type="FunFam" id="3.40.50.10050:FF:000001">
    <property type="entry name" value="Translation initiation factor IF-2"/>
    <property type="match status" value="1"/>
</dbReference>
<dbReference type="FunFam" id="3.40.50.300:FF:000019">
    <property type="entry name" value="Translation initiation factor IF-2"/>
    <property type="match status" value="1"/>
</dbReference>
<dbReference type="Gene3D" id="3.40.50.300">
    <property type="entry name" value="P-loop containing nucleotide triphosphate hydrolases"/>
    <property type="match status" value="1"/>
</dbReference>
<dbReference type="Gene3D" id="2.40.30.10">
    <property type="entry name" value="Translation factors"/>
    <property type="match status" value="2"/>
</dbReference>
<dbReference type="Gene3D" id="3.40.50.10050">
    <property type="entry name" value="Translation initiation factor IF- 2, domain 3"/>
    <property type="match status" value="1"/>
</dbReference>
<dbReference type="HAMAP" id="MF_00100_B">
    <property type="entry name" value="IF_2_B"/>
    <property type="match status" value="1"/>
</dbReference>
<dbReference type="InterPro" id="IPR053905">
    <property type="entry name" value="EF-G-like_DII"/>
</dbReference>
<dbReference type="InterPro" id="IPR044145">
    <property type="entry name" value="IF2_II"/>
</dbReference>
<dbReference type="InterPro" id="IPR006847">
    <property type="entry name" value="IF2_N"/>
</dbReference>
<dbReference type="InterPro" id="IPR027417">
    <property type="entry name" value="P-loop_NTPase"/>
</dbReference>
<dbReference type="InterPro" id="IPR005225">
    <property type="entry name" value="Small_GTP-bd"/>
</dbReference>
<dbReference type="InterPro" id="IPR000795">
    <property type="entry name" value="T_Tr_GTP-bd_dom"/>
</dbReference>
<dbReference type="InterPro" id="IPR000178">
    <property type="entry name" value="TF_IF2_bacterial-like"/>
</dbReference>
<dbReference type="InterPro" id="IPR015760">
    <property type="entry name" value="TIF_IF2"/>
</dbReference>
<dbReference type="InterPro" id="IPR023115">
    <property type="entry name" value="TIF_IF2_dom3"/>
</dbReference>
<dbReference type="InterPro" id="IPR036925">
    <property type="entry name" value="TIF_IF2_dom3_sf"/>
</dbReference>
<dbReference type="InterPro" id="IPR009000">
    <property type="entry name" value="Transl_B-barrel_sf"/>
</dbReference>
<dbReference type="NCBIfam" id="TIGR00487">
    <property type="entry name" value="IF-2"/>
    <property type="match status" value="1"/>
</dbReference>
<dbReference type="NCBIfam" id="TIGR00231">
    <property type="entry name" value="small_GTP"/>
    <property type="match status" value="1"/>
</dbReference>
<dbReference type="PANTHER" id="PTHR43381:SF5">
    <property type="entry name" value="TR-TYPE G DOMAIN-CONTAINING PROTEIN"/>
    <property type="match status" value="1"/>
</dbReference>
<dbReference type="PANTHER" id="PTHR43381">
    <property type="entry name" value="TRANSLATION INITIATION FACTOR IF-2-RELATED"/>
    <property type="match status" value="1"/>
</dbReference>
<dbReference type="Pfam" id="PF22042">
    <property type="entry name" value="EF-G_D2"/>
    <property type="match status" value="1"/>
</dbReference>
<dbReference type="Pfam" id="PF00009">
    <property type="entry name" value="GTP_EFTU"/>
    <property type="match status" value="1"/>
</dbReference>
<dbReference type="Pfam" id="PF11987">
    <property type="entry name" value="IF-2"/>
    <property type="match status" value="1"/>
</dbReference>
<dbReference type="Pfam" id="PF04760">
    <property type="entry name" value="IF2_N"/>
    <property type="match status" value="1"/>
</dbReference>
<dbReference type="SUPFAM" id="SSF52156">
    <property type="entry name" value="Initiation factor IF2/eIF5b, domain 3"/>
    <property type="match status" value="1"/>
</dbReference>
<dbReference type="SUPFAM" id="SSF52540">
    <property type="entry name" value="P-loop containing nucleoside triphosphate hydrolases"/>
    <property type="match status" value="1"/>
</dbReference>
<dbReference type="SUPFAM" id="SSF50447">
    <property type="entry name" value="Translation proteins"/>
    <property type="match status" value="2"/>
</dbReference>
<dbReference type="PROSITE" id="PS51722">
    <property type="entry name" value="G_TR_2"/>
    <property type="match status" value="1"/>
</dbReference>
<dbReference type="PROSITE" id="PS01176">
    <property type="entry name" value="IF2"/>
    <property type="match status" value="1"/>
</dbReference>
<sequence length="937" mass="104641">MSEMVDLKEFLAELGKTQKELKNVIEQAKDIGLELKTNSKMTPEEANKLYKYIVEGIKEQIQANQPAKNPEQDNKDDLNTAVASKPLNKKVSKTPKKEEKSQPKPKKTKEKKKEAPTPIAKKKGGIEIVNTFENQTPPVENNPKVVSHSQIEKAKQKLQEIQKSREALNKLTQSNANNAKKEISEVKKQEQEIKRHENIKRRTGFRVIKRNDEVENESENSVTESKKPTQSAAAIFEDIKKEWQEKDKQEAKKAKKPSKPKATPTAKNNKSHKIDFSDARDFKGNDIYDDETDEILLFDLHEQDNFNKEEEEKEIRQNINDRVRVQRKNPWMNESGIKRQSKKKRAFRNDNSQKVIQSAIAIPEEVRVYEFAQKANLNLADVIKTLFNLGLMVTKNDFLDKDSIEILAEEFHLEISVQNTLEEFEVEEVLEGVKKERPPVVTIMGHVDHGKTSLLDKIRDKRVAHTEAGGITQHIGAYMVEKNGKWVSFIDTPGHEAFSQMRNRGAQVTDIAVIVIAADDGVKQQTIEALEHAKAANVPVIFAMNKMDKPNVNPDKLKAECAELGYNPVDWGGEHEFIPVSAKTGDGIDNLLETILIQADIMELKAIEEGSARAVVLEGSVEKGRGAVATVIVQSGTLSVGDSFFAETAFGKVRTMTDDQGKSIQNLKPSMVALITGLSEVPPAGSVLIGVENDSIARLQAQKRATYLRQKALSKSTKVSFDELSEMVANKELKNIPVVIKADTQGSLEAIKNSLLELNNEEVAIQVIHSGVGGITENDLSLVSSSDHAVILGFNIRPTGNVKNKAKEYNVSIKTYTVIYALIEEMRSLLLGLMSPIIEEEHTGQAEVRETFNIPKVGTIAGCVVSDGVIARGIKARLIRDGVVVHTGEILSLKRFKDDVKEVSKGYECGIMLDNYNEIKVGDVFETYKEIHKKRTL</sequence>
<name>IF2_HELPG</name>
<feature type="chain" id="PRO_1000093792" description="Translation initiation factor IF-2">
    <location>
        <begin position="1"/>
        <end position="937"/>
    </location>
</feature>
<feature type="domain" description="tr-type G">
    <location>
        <begin position="436"/>
        <end position="605"/>
    </location>
</feature>
<feature type="region of interest" description="Disordered" evidence="3">
    <location>
        <begin position="61"/>
        <end position="156"/>
    </location>
</feature>
<feature type="region of interest" description="Disordered" evidence="3">
    <location>
        <begin position="171"/>
        <end position="274"/>
    </location>
</feature>
<feature type="region of interest" description="G1" evidence="1">
    <location>
        <begin position="445"/>
        <end position="452"/>
    </location>
</feature>
<feature type="region of interest" description="G2" evidence="1">
    <location>
        <begin position="470"/>
        <end position="474"/>
    </location>
</feature>
<feature type="region of interest" description="G3" evidence="1">
    <location>
        <begin position="491"/>
        <end position="494"/>
    </location>
</feature>
<feature type="region of interest" description="G4" evidence="1">
    <location>
        <begin position="545"/>
        <end position="548"/>
    </location>
</feature>
<feature type="region of interest" description="G5" evidence="1">
    <location>
        <begin position="581"/>
        <end position="583"/>
    </location>
</feature>
<feature type="compositionally biased region" description="Basic and acidic residues" evidence="3">
    <location>
        <begin position="179"/>
        <end position="196"/>
    </location>
</feature>
<feature type="compositionally biased region" description="Basic residues" evidence="3">
    <location>
        <begin position="197"/>
        <end position="208"/>
    </location>
</feature>
<feature type="compositionally biased region" description="Basic and acidic residues" evidence="3">
    <location>
        <begin position="237"/>
        <end position="252"/>
    </location>
</feature>
<feature type="binding site" evidence="2">
    <location>
        <begin position="445"/>
        <end position="452"/>
    </location>
    <ligand>
        <name>GTP</name>
        <dbReference type="ChEBI" id="CHEBI:37565"/>
    </ligand>
</feature>
<feature type="binding site" evidence="2">
    <location>
        <begin position="491"/>
        <end position="495"/>
    </location>
    <ligand>
        <name>GTP</name>
        <dbReference type="ChEBI" id="CHEBI:37565"/>
    </ligand>
</feature>
<feature type="binding site" evidence="2">
    <location>
        <begin position="545"/>
        <end position="548"/>
    </location>
    <ligand>
        <name>GTP</name>
        <dbReference type="ChEBI" id="CHEBI:37565"/>
    </ligand>
</feature>